<dbReference type="EC" id="6.3.1.5" evidence="1"/>
<dbReference type="EMBL" id="CP000492">
    <property type="protein sequence ID" value="ABL64861.1"/>
    <property type="molecule type" value="Genomic_DNA"/>
</dbReference>
<dbReference type="RefSeq" id="WP_011744689.1">
    <property type="nucleotide sequence ID" value="NC_008639.1"/>
</dbReference>
<dbReference type="SMR" id="A1BEN4"/>
<dbReference type="STRING" id="290317.Cpha266_0810"/>
<dbReference type="KEGG" id="cph:Cpha266_0810"/>
<dbReference type="eggNOG" id="COG0171">
    <property type="taxonomic scope" value="Bacteria"/>
</dbReference>
<dbReference type="HOGENOM" id="CLU_059327_1_2_10"/>
<dbReference type="OrthoDB" id="9803818at2"/>
<dbReference type="UniPathway" id="UPA00253">
    <property type="reaction ID" value="UER00333"/>
</dbReference>
<dbReference type="Proteomes" id="UP000008701">
    <property type="component" value="Chromosome"/>
</dbReference>
<dbReference type="GO" id="GO:0005737">
    <property type="term" value="C:cytoplasm"/>
    <property type="evidence" value="ECO:0007669"/>
    <property type="project" value="InterPro"/>
</dbReference>
<dbReference type="GO" id="GO:0005524">
    <property type="term" value="F:ATP binding"/>
    <property type="evidence" value="ECO:0007669"/>
    <property type="project" value="UniProtKB-UniRule"/>
</dbReference>
<dbReference type="GO" id="GO:0004359">
    <property type="term" value="F:glutaminase activity"/>
    <property type="evidence" value="ECO:0007669"/>
    <property type="project" value="InterPro"/>
</dbReference>
<dbReference type="GO" id="GO:0046872">
    <property type="term" value="F:metal ion binding"/>
    <property type="evidence" value="ECO:0007669"/>
    <property type="project" value="UniProtKB-KW"/>
</dbReference>
<dbReference type="GO" id="GO:0003952">
    <property type="term" value="F:NAD+ synthase (glutamine-hydrolyzing) activity"/>
    <property type="evidence" value="ECO:0007669"/>
    <property type="project" value="InterPro"/>
</dbReference>
<dbReference type="GO" id="GO:0008795">
    <property type="term" value="F:NAD+ synthase activity"/>
    <property type="evidence" value="ECO:0007669"/>
    <property type="project" value="UniProtKB-UniRule"/>
</dbReference>
<dbReference type="GO" id="GO:0009435">
    <property type="term" value="P:NAD biosynthetic process"/>
    <property type="evidence" value="ECO:0007669"/>
    <property type="project" value="UniProtKB-UniRule"/>
</dbReference>
<dbReference type="CDD" id="cd00553">
    <property type="entry name" value="NAD_synthase"/>
    <property type="match status" value="1"/>
</dbReference>
<dbReference type="FunFam" id="3.40.50.620:FF:000106">
    <property type="entry name" value="Glutamine-dependent NAD(+) synthetase"/>
    <property type="match status" value="1"/>
</dbReference>
<dbReference type="Gene3D" id="3.40.50.620">
    <property type="entry name" value="HUPs"/>
    <property type="match status" value="1"/>
</dbReference>
<dbReference type="HAMAP" id="MF_00193">
    <property type="entry name" value="NadE_ammonia_dep"/>
    <property type="match status" value="1"/>
</dbReference>
<dbReference type="InterPro" id="IPR022310">
    <property type="entry name" value="NAD/GMP_synthase"/>
</dbReference>
<dbReference type="InterPro" id="IPR003694">
    <property type="entry name" value="NAD_synthase"/>
</dbReference>
<dbReference type="InterPro" id="IPR022926">
    <property type="entry name" value="NH(3)-dep_NAD(+)_synth"/>
</dbReference>
<dbReference type="InterPro" id="IPR014729">
    <property type="entry name" value="Rossmann-like_a/b/a_fold"/>
</dbReference>
<dbReference type="NCBIfam" id="TIGR00552">
    <property type="entry name" value="nadE"/>
    <property type="match status" value="1"/>
</dbReference>
<dbReference type="NCBIfam" id="NF010587">
    <property type="entry name" value="PRK13980.1"/>
    <property type="match status" value="1"/>
</dbReference>
<dbReference type="PANTHER" id="PTHR23090:SF9">
    <property type="entry name" value="GLUTAMINE-DEPENDENT NAD(+) SYNTHETASE"/>
    <property type="match status" value="1"/>
</dbReference>
<dbReference type="PANTHER" id="PTHR23090">
    <property type="entry name" value="NH 3 /GLUTAMINE-DEPENDENT NAD + SYNTHETASE"/>
    <property type="match status" value="1"/>
</dbReference>
<dbReference type="Pfam" id="PF02540">
    <property type="entry name" value="NAD_synthase"/>
    <property type="match status" value="1"/>
</dbReference>
<dbReference type="SUPFAM" id="SSF52402">
    <property type="entry name" value="Adenine nucleotide alpha hydrolases-like"/>
    <property type="match status" value="1"/>
</dbReference>
<feature type="chain" id="PRO_1000077545" description="NH(3)-dependent NAD(+) synthetase">
    <location>
        <begin position="1"/>
        <end position="277"/>
    </location>
</feature>
<feature type="binding site" evidence="1">
    <location>
        <begin position="36"/>
        <end position="43"/>
    </location>
    <ligand>
        <name>ATP</name>
        <dbReference type="ChEBI" id="CHEBI:30616"/>
    </ligand>
</feature>
<feature type="binding site" evidence="1">
    <location>
        <position position="42"/>
    </location>
    <ligand>
        <name>Mg(2+)</name>
        <dbReference type="ChEBI" id="CHEBI:18420"/>
    </ligand>
</feature>
<feature type="binding site" evidence="1">
    <location>
        <position position="118"/>
    </location>
    <ligand>
        <name>deamido-NAD(+)</name>
        <dbReference type="ChEBI" id="CHEBI:58437"/>
    </ligand>
</feature>
<feature type="binding site" evidence="1">
    <location>
        <position position="138"/>
    </location>
    <ligand>
        <name>ATP</name>
        <dbReference type="ChEBI" id="CHEBI:30616"/>
    </ligand>
</feature>
<feature type="binding site" evidence="1">
    <location>
        <position position="143"/>
    </location>
    <ligand>
        <name>Mg(2+)</name>
        <dbReference type="ChEBI" id="CHEBI:18420"/>
    </ligand>
</feature>
<feature type="binding site" evidence="1">
    <location>
        <position position="167"/>
    </location>
    <ligand>
        <name>ATP</name>
        <dbReference type="ChEBI" id="CHEBI:30616"/>
    </ligand>
</feature>
<feature type="binding site" evidence="1">
    <location>
        <position position="189"/>
    </location>
    <ligand>
        <name>ATP</name>
        <dbReference type="ChEBI" id="CHEBI:30616"/>
    </ligand>
</feature>
<evidence type="ECO:0000255" key="1">
    <source>
        <dbReference type="HAMAP-Rule" id="MF_00193"/>
    </source>
</evidence>
<accession>A1BEN4</accession>
<name>NADE_CHLPD</name>
<reference key="1">
    <citation type="submission" date="2006-12" db="EMBL/GenBank/DDBJ databases">
        <title>Complete sequence of Chlorobium phaeobacteroides DSM 266.</title>
        <authorList>
            <consortium name="US DOE Joint Genome Institute"/>
            <person name="Copeland A."/>
            <person name="Lucas S."/>
            <person name="Lapidus A."/>
            <person name="Barry K."/>
            <person name="Detter J.C."/>
            <person name="Glavina del Rio T."/>
            <person name="Hammon N."/>
            <person name="Israni S."/>
            <person name="Pitluck S."/>
            <person name="Goltsman E."/>
            <person name="Schmutz J."/>
            <person name="Larimer F."/>
            <person name="Land M."/>
            <person name="Hauser L."/>
            <person name="Mikhailova N."/>
            <person name="Li T."/>
            <person name="Overmann J."/>
            <person name="Bryant D.A."/>
            <person name="Richardson P."/>
        </authorList>
    </citation>
    <scope>NUCLEOTIDE SEQUENCE [LARGE SCALE GENOMIC DNA]</scope>
    <source>
        <strain>DSM 266 / SMG 266 / 2430</strain>
    </source>
</reference>
<protein>
    <recommendedName>
        <fullName evidence="1">NH(3)-dependent NAD(+) synthetase</fullName>
        <ecNumber evidence="1">6.3.1.5</ecNumber>
    </recommendedName>
</protein>
<organism>
    <name type="scientific">Chlorobium phaeobacteroides (strain DSM 266 / SMG 266 / 2430)</name>
    <dbReference type="NCBI Taxonomy" id="290317"/>
    <lineage>
        <taxon>Bacteria</taxon>
        <taxon>Pseudomonadati</taxon>
        <taxon>Chlorobiota</taxon>
        <taxon>Chlorobiia</taxon>
        <taxon>Chlorobiales</taxon>
        <taxon>Chlorobiaceae</taxon>
        <taxon>Chlorobium/Pelodictyon group</taxon>
        <taxon>Chlorobium</taxon>
    </lineage>
</organism>
<comment type="function">
    <text evidence="1">Catalyzes the ATP-dependent amidation of deamido-NAD to form NAD. Uses ammonia as a nitrogen source.</text>
</comment>
<comment type="catalytic activity">
    <reaction evidence="1">
        <text>deamido-NAD(+) + NH4(+) + ATP = AMP + diphosphate + NAD(+) + H(+)</text>
        <dbReference type="Rhea" id="RHEA:21188"/>
        <dbReference type="ChEBI" id="CHEBI:15378"/>
        <dbReference type="ChEBI" id="CHEBI:28938"/>
        <dbReference type="ChEBI" id="CHEBI:30616"/>
        <dbReference type="ChEBI" id="CHEBI:33019"/>
        <dbReference type="ChEBI" id="CHEBI:57540"/>
        <dbReference type="ChEBI" id="CHEBI:58437"/>
        <dbReference type="ChEBI" id="CHEBI:456215"/>
        <dbReference type="EC" id="6.3.1.5"/>
    </reaction>
</comment>
<comment type="pathway">
    <text evidence="1">Cofactor biosynthesis; NAD(+) biosynthesis; NAD(+) from deamido-NAD(+) (ammonia route): step 1/1.</text>
</comment>
<comment type="subunit">
    <text evidence="1">Homodimer.</text>
</comment>
<comment type="similarity">
    <text evidence="1">Belongs to the NAD synthetase family.</text>
</comment>
<sequence>MNSLDLHLDYGIVEDILKTFLLNEIRKFGFRSVVLGLSGGIDSAVVCELASRALGSDQVLALMMPYRSSSTDSIVHAQLLVEKLGIRAETCSITAAVDAFFEGVPEEDRLRRGNIMARTRMVYLYDVSARQNSLVVGTSNKTELLLGYGTLFGDMASAVNPVGDLYKTQIRGLARHLGIPEQLITKTPSADLWEGQSDEADLGFSYDEVDHLLFMMLEKRMDKAAIIEQGVSEIFYDRVRKMVVRNQYKRMMPVIAKISSRTPGIDFRYARDWQEVK</sequence>
<proteinExistence type="inferred from homology"/>
<keyword id="KW-0067">ATP-binding</keyword>
<keyword id="KW-0436">Ligase</keyword>
<keyword id="KW-0460">Magnesium</keyword>
<keyword id="KW-0479">Metal-binding</keyword>
<keyword id="KW-0520">NAD</keyword>
<keyword id="KW-0547">Nucleotide-binding</keyword>
<keyword id="KW-1185">Reference proteome</keyword>
<gene>
    <name evidence="1" type="primary">nadE</name>
    <name type="ordered locus">Cpha266_0810</name>
</gene>